<sequence>MEEIKPASASCVSKEKPSKVSDLISRFEGGSSLSNYSDLKKESAVNLNAPRTPGRHGLTTTPQQKLLSQHLPQRQGNDTDKTQGAQTCVANGVMAAQNQMECEEEKAATLSSDTSIQASEPLLDTHIVNGERDETATAPASPTTDSCDGNASDSSYRTPGIGPVLPLEERGAETETKVQERENGESPLELEQLDQHHEMKETNEQKLHKIANELLLTERAYVNRLDLLDQVFYCKLLEEANRGSFPAEMVNKIFSNISSINAFHSKFLLPELEKRMQEWETTPRIGDILQKLAPFLKMYGEYVKGFDNAMELVKNMTERIPQFKSVVEEIQKQKICGSLTLQHHMLEPVQRIPRYEMLLKDYLRKLPPDSLDWNDAKKSLEIISTAASHSNSAIRKMENLKKLLEIYEMLGEEEDIVNPSNELIKEGQILKLAARNTSAQERYLFLFNNMLLYCVPKFSLVGSKFTVRTRVGIDGMKIVETQNEEYPHTFQVSGKERTLELQASSAQDKEEWIKALQETIDAFHQRHETFRNAIAKDNDIHSEVSTAELGKRAPRWIRDNEVTMCMKCKEPFNALTRRRHHCRACGYVVCWKCSDYKAQLEYDGGKLSKVCKDCYQIISGFTDSEEKKRKGILEIESAEVSGNSVVCSFLQYMEKSKPWQKAWCVIPKQDPLVLYMYGAPQDVRAQATIPLLGYVVDEMPRSADLPHSFKLTQSKSVHSFAADSEELKQKWLKVILLAVTGETPGGPNEHPATLDDHPEPKKKSEC</sequence>
<protein>
    <recommendedName>
        <fullName>FYVE, RhoGEF and PH domain-containing protein 4</fullName>
    </recommendedName>
    <alternativeName>
        <fullName>Actin filament-binding protein frabin</fullName>
    </alternativeName>
    <alternativeName>
        <fullName>FGD1-related F-actin-binding protein</fullName>
    </alternativeName>
    <alternativeName>
        <fullName>Zinc finger FYVE domain-containing protein 6</fullName>
    </alternativeName>
</protein>
<name>FGD4_HUMAN</name>
<gene>
    <name type="primary">FGD4</name>
    <name type="synonym">FRABP</name>
    <name type="synonym">ZFYVE6</name>
</gene>
<feature type="chain" id="PRO_0000080947" description="FYVE, RhoGEF and PH domain-containing protein 4">
    <location>
        <begin position="1"/>
        <end position="766"/>
    </location>
</feature>
<feature type="domain" description="DH" evidence="3">
    <location>
        <begin position="206"/>
        <end position="393"/>
    </location>
</feature>
<feature type="domain" description="PH 1" evidence="5">
    <location>
        <begin position="422"/>
        <end position="521"/>
    </location>
</feature>
<feature type="domain" description="PH 2" evidence="5">
    <location>
        <begin position="643"/>
        <end position="740"/>
    </location>
</feature>
<feature type="zinc finger region" description="FYVE-type" evidence="4">
    <location>
        <begin position="559"/>
        <end position="619"/>
    </location>
</feature>
<feature type="region of interest" description="Actin filament-binding" evidence="1">
    <location>
        <begin position="1"/>
        <end position="150"/>
    </location>
</feature>
<feature type="region of interest" description="Disordered" evidence="6">
    <location>
        <begin position="1"/>
        <end position="20"/>
    </location>
</feature>
<feature type="region of interest" description="Disordered" evidence="6">
    <location>
        <begin position="46"/>
        <end position="83"/>
    </location>
</feature>
<feature type="region of interest" description="Disordered" evidence="6">
    <location>
        <begin position="134"/>
        <end position="188"/>
    </location>
</feature>
<feature type="region of interest" description="Disordered" evidence="6">
    <location>
        <begin position="742"/>
        <end position="766"/>
    </location>
</feature>
<feature type="compositionally biased region" description="Polar residues" evidence="6">
    <location>
        <begin position="58"/>
        <end position="83"/>
    </location>
</feature>
<feature type="compositionally biased region" description="Polar residues" evidence="6">
    <location>
        <begin position="145"/>
        <end position="157"/>
    </location>
</feature>
<feature type="compositionally biased region" description="Basic and acidic residues" evidence="6">
    <location>
        <begin position="167"/>
        <end position="184"/>
    </location>
</feature>
<feature type="compositionally biased region" description="Basic and acidic residues" evidence="6">
    <location>
        <begin position="752"/>
        <end position="766"/>
    </location>
</feature>
<feature type="binding site" evidence="4">
    <location>
        <position position="565"/>
    </location>
    <ligand>
        <name>Zn(2+)</name>
        <dbReference type="ChEBI" id="CHEBI:29105"/>
        <label>1</label>
    </ligand>
</feature>
<feature type="binding site" evidence="4">
    <location>
        <position position="568"/>
    </location>
    <ligand>
        <name>Zn(2+)</name>
        <dbReference type="ChEBI" id="CHEBI:29105"/>
        <label>1</label>
    </ligand>
</feature>
<feature type="binding site" evidence="4">
    <location>
        <position position="582"/>
    </location>
    <ligand>
        <name>Zn(2+)</name>
        <dbReference type="ChEBI" id="CHEBI:29105"/>
        <label>2</label>
    </ligand>
</feature>
<feature type="binding site" evidence="4">
    <location>
        <position position="585"/>
    </location>
    <ligand>
        <name>Zn(2+)</name>
        <dbReference type="ChEBI" id="CHEBI:29105"/>
        <label>2</label>
    </ligand>
</feature>
<feature type="binding site" evidence="4">
    <location>
        <position position="590"/>
    </location>
    <ligand>
        <name>Zn(2+)</name>
        <dbReference type="ChEBI" id="CHEBI:29105"/>
        <label>1</label>
    </ligand>
</feature>
<feature type="binding site" evidence="4">
    <location>
        <position position="593"/>
    </location>
    <ligand>
        <name>Zn(2+)</name>
        <dbReference type="ChEBI" id="CHEBI:29105"/>
        <label>1</label>
    </ligand>
</feature>
<feature type="binding site" evidence="4">
    <location>
        <position position="611"/>
    </location>
    <ligand>
        <name>Zn(2+)</name>
        <dbReference type="ChEBI" id="CHEBI:29105"/>
        <label>2</label>
    </ligand>
</feature>
<feature type="binding site" evidence="4">
    <location>
        <position position="614"/>
    </location>
    <ligand>
        <name>Zn(2+)</name>
        <dbReference type="ChEBI" id="CHEBI:29105"/>
        <label>2</label>
    </ligand>
</feature>
<feature type="modified residue" description="Phosphoserine" evidence="13">
    <location>
        <position position="702"/>
    </location>
</feature>
<feature type="modified residue" description="Phosphoserine" evidence="2">
    <location>
        <position position="716"/>
    </location>
</feature>
<feature type="splice variant" id="VSP_013078" description="In isoform 2." evidence="11">
    <location>
        <begin position="1"/>
        <end position="248"/>
    </location>
</feature>
<feature type="splice variant" id="VSP_013079" description="In isoform 3." evidence="10">
    <original>MEEIKPASASCVSKEKPSKVSDLISRFEGG</original>
    <variation>MFSCFLCILSF</variation>
    <location>
        <begin position="1"/>
        <end position="30"/>
    </location>
</feature>
<feature type="splice variant" id="VSP_013080" description="In isoform 3." evidence="10">
    <original>ETNEQKL</original>
    <variation>VEHETSS</variation>
    <location>
        <begin position="201"/>
        <end position="207"/>
    </location>
</feature>
<feature type="splice variant" id="VSP_013081" description="In isoform 3." evidence="10">
    <location>
        <begin position="208"/>
        <end position="766"/>
    </location>
</feature>
<feature type="splice variant" id="VSP_013082" description="In isoform 2." evidence="11">
    <original>ALQETIDAFHQRHETFRNAIAKDNDIHSEVSTAELGKRAPRWIRDNEVTMCMKCKEPFNALTRRRHHCRACGYVVCWKCSDYKAQLEYDGGKLSKVCKDCYQIISGFTDSEEKKRKGILEIESAEVSGNSVVCSFLQYMEKSKPWQKAWCVIPKQDPLVLYMYGAPQDVRAQATIPLLGYVVDEMPRSADLPHSFKLTQSKSVHSFAADSEELKQKWLKVILLAVTGETPGGPNEHPATLDDHPEPKKKSEC</original>
    <variation>RRGFAMLPRLISNS</variation>
    <location>
        <begin position="515"/>
        <end position="766"/>
    </location>
</feature>
<feature type="sequence variant" id="VAR_034957" description="In CMT4H; found in patient's fibroblasts but absent from peripheral nerve where splicing defects and aberrant transcripts are detected; dbSNP:rs63749871." evidence="8 9">
    <original>M</original>
    <variation>R</variation>
    <location>
        <position position="298"/>
    </location>
</feature>
<feature type="sequence variant" id="VAR_044321" description="In CMT4H; dbSNP:rs63749871." evidence="8">
    <original>M</original>
    <variation>T</variation>
    <location>
        <position position="298"/>
    </location>
</feature>
<feature type="sequence conflict" description="In Ref. 2; BAB71413." evidence="12" ref="2">
    <original>T</original>
    <variation>A</variation>
    <location>
        <position position="79"/>
    </location>
</feature>
<feature type="sequence conflict" description="In Ref. 1; AAQ72372." evidence="12" ref="1">
    <original>V</original>
    <variation>A</variation>
    <location>
        <position position="303"/>
    </location>
</feature>
<reference key="1">
    <citation type="submission" date="2003-08" db="EMBL/GenBank/DDBJ databases">
        <title>Cloning a new transcript of actin-filament binding protein frabin in testis.</title>
        <authorList>
            <person name="Lu L."/>
            <person name="Huang X.Y."/>
            <person name="Xu M."/>
            <person name="Yin L.L."/>
            <person name="Li J.M."/>
            <person name="Zhou Z.M."/>
            <person name="Sha J.H."/>
        </authorList>
    </citation>
    <scope>NUCLEOTIDE SEQUENCE [MRNA] (ISOFORM 2)</scope>
    <source>
        <tissue>Testis</tissue>
    </source>
</reference>
<reference key="2">
    <citation type="journal article" date="2004" name="Nat. Genet.">
        <title>Complete sequencing and characterization of 21,243 full-length human cDNAs.</title>
        <authorList>
            <person name="Ota T."/>
            <person name="Suzuki Y."/>
            <person name="Nishikawa T."/>
            <person name="Otsuki T."/>
            <person name="Sugiyama T."/>
            <person name="Irie R."/>
            <person name="Wakamatsu A."/>
            <person name="Hayashi K."/>
            <person name="Sato H."/>
            <person name="Nagai K."/>
            <person name="Kimura K."/>
            <person name="Makita H."/>
            <person name="Sekine M."/>
            <person name="Obayashi M."/>
            <person name="Nishi T."/>
            <person name="Shibahara T."/>
            <person name="Tanaka T."/>
            <person name="Ishii S."/>
            <person name="Yamamoto J."/>
            <person name="Saito K."/>
            <person name="Kawai Y."/>
            <person name="Isono Y."/>
            <person name="Nakamura Y."/>
            <person name="Nagahari K."/>
            <person name="Murakami K."/>
            <person name="Yasuda T."/>
            <person name="Iwayanagi T."/>
            <person name="Wagatsuma M."/>
            <person name="Shiratori A."/>
            <person name="Sudo H."/>
            <person name="Hosoiri T."/>
            <person name="Kaku Y."/>
            <person name="Kodaira H."/>
            <person name="Kondo H."/>
            <person name="Sugawara M."/>
            <person name="Takahashi M."/>
            <person name="Kanda K."/>
            <person name="Yokoi T."/>
            <person name="Furuya T."/>
            <person name="Kikkawa E."/>
            <person name="Omura Y."/>
            <person name="Abe K."/>
            <person name="Kamihara K."/>
            <person name="Katsuta N."/>
            <person name="Sato K."/>
            <person name="Tanikawa M."/>
            <person name="Yamazaki M."/>
            <person name="Ninomiya K."/>
            <person name="Ishibashi T."/>
            <person name="Yamashita H."/>
            <person name="Murakawa K."/>
            <person name="Fujimori K."/>
            <person name="Tanai H."/>
            <person name="Kimata M."/>
            <person name="Watanabe M."/>
            <person name="Hiraoka S."/>
            <person name="Chiba Y."/>
            <person name="Ishida S."/>
            <person name="Ono Y."/>
            <person name="Takiguchi S."/>
            <person name="Watanabe S."/>
            <person name="Yosida M."/>
            <person name="Hotuta T."/>
            <person name="Kusano J."/>
            <person name="Kanehori K."/>
            <person name="Takahashi-Fujii A."/>
            <person name="Hara H."/>
            <person name="Tanase T.-O."/>
            <person name="Nomura Y."/>
            <person name="Togiya S."/>
            <person name="Komai F."/>
            <person name="Hara R."/>
            <person name="Takeuchi K."/>
            <person name="Arita M."/>
            <person name="Imose N."/>
            <person name="Musashino K."/>
            <person name="Yuuki H."/>
            <person name="Oshima A."/>
            <person name="Sasaki N."/>
            <person name="Aotsuka S."/>
            <person name="Yoshikawa Y."/>
            <person name="Matsunawa H."/>
            <person name="Ichihara T."/>
            <person name="Shiohata N."/>
            <person name="Sano S."/>
            <person name="Moriya S."/>
            <person name="Momiyama H."/>
            <person name="Satoh N."/>
            <person name="Takami S."/>
            <person name="Terashima Y."/>
            <person name="Suzuki O."/>
            <person name="Nakagawa S."/>
            <person name="Senoh A."/>
            <person name="Mizoguchi H."/>
            <person name="Goto Y."/>
            <person name="Shimizu F."/>
            <person name="Wakebe H."/>
            <person name="Hishigaki H."/>
            <person name="Watanabe T."/>
            <person name="Sugiyama A."/>
            <person name="Takemoto M."/>
            <person name="Kawakami B."/>
            <person name="Yamazaki M."/>
            <person name="Watanabe K."/>
            <person name="Kumagai A."/>
            <person name="Itakura S."/>
            <person name="Fukuzumi Y."/>
            <person name="Fujimori Y."/>
            <person name="Komiyama M."/>
            <person name="Tashiro H."/>
            <person name="Tanigami A."/>
            <person name="Fujiwara T."/>
            <person name="Ono T."/>
            <person name="Yamada K."/>
            <person name="Fujii Y."/>
            <person name="Ozaki K."/>
            <person name="Hirao M."/>
            <person name="Ohmori Y."/>
            <person name="Kawabata A."/>
            <person name="Hikiji T."/>
            <person name="Kobatake N."/>
            <person name="Inagaki H."/>
            <person name="Ikema Y."/>
            <person name="Okamoto S."/>
            <person name="Okitani R."/>
            <person name="Kawakami T."/>
            <person name="Noguchi S."/>
            <person name="Itoh T."/>
            <person name="Shigeta K."/>
            <person name="Senba T."/>
            <person name="Matsumura K."/>
            <person name="Nakajima Y."/>
            <person name="Mizuno T."/>
            <person name="Morinaga M."/>
            <person name="Sasaki M."/>
            <person name="Togashi T."/>
            <person name="Oyama M."/>
            <person name="Hata H."/>
            <person name="Watanabe M."/>
            <person name="Komatsu T."/>
            <person name="Mizushima-Sugano J."/>
            <person name="Satoh T."/>
            <person name="Shirai Y."/>
            <person name="Takahashi Y."/>
            <person name="Nakagawa K."/>
            <person name="Okumura K."/>
            <person name="Nagase T."/>
            <person name="Nomura N."/>
            <person name="Kikuchi H."/>
            <person name="Masuho Y."/>
            <person name="Yamashita R."/>
            <person name="Nakai K."/>
            <person name="Yada T."/>
            <person name="Nakamura Y."/>
            <person name="Ohara O."/>
            <person name="Isogai T."/>
            <person name="Sugano S."/>
        </authorList>
    </citation>
    <scope>NUCLEOTIDE SEQUENCE [LARGE SCALE MRNA] (ISOFORM 1)</scope>
    <source>
        <tissue>Testis</tissue>
    </source>
</reference>
<reference key="3">
    <citation type="journal article" date="2007" name="BMC Genomics">
        <title>The full-ORF clone resource of the German cDNA consortium.</title>
        <authorList>
            <person name="Bechtel S."/>
            <person name="Rosenfelder H."/>
            <person name="Duda A."/>
            <person name="Schmidt C.P."/>
            <person name="Ernst U."/>
            <person name="Wellenreuther R."/>
            <person name="Mehrle A."/>
            <person name="Schuster C."/>
            <person name="Bahr A."/>
            <person name="Bloecker H."/>
            <person name="Heubner D."/>
            <person name="Hoerlein A."/>
            <person name="Michel G."/>
            <person name="Wedler H."/>
            <person name="Koehrer K."/>
            <person name="Ottenwaelder B."/>
            <person name="Poustka A."/>
            <person name="Wiemann S."/>
            <person name="Schupp I."/>
        </authorList>
    </citation>
    <scope>NUCLEOTIDE SEQUENCE [LARGE SCALE MRNA] (ISOFORM 3)</scope>
    <source>
        <tissue>Testis</tissue>
    </source>
</reference>
<reference key="4">
    <citation type="journal article" date="2004" name="J. Biol. Chem.">
        <title>Phosphatidylinositol 3-kinase and frabin mediate Cryptosporidium parvum cellular invasion via activation of Cdc42.</title>
        <authorList>
            <person name="Chen X.M."/>
            <person name="Splinter P.L."/>
            <person name="Tietz P.S."/>
            <person name="Huang B.Q."/>
            <person name="Billadeau D.D."/>
            <person name="LaRusso N.F."/>
        </authorList>
    </citation>
    <scope>FUNCTION</scope>
</reference>
<reference key="5">
    <citation type="journal article" date="2007" name="Am. J. Hum. Genet.">
        <title>Mutations in FGD4 encoding the Rho GDP/GTP exchange factor FRABIN cause autosomal recessive Charcot-Marie-Tooth type 4H.</title>
        <authorList>
            <person name="Delague V."/>
            <person name="Jacquier A."/>
            <person name="Hamadouche T."/>
            <person name="Poitelon Y."/>
            <person name="Baudot C."/>
            <person name="Boccaccio I."/>
            <person name="Chouery E."/>
            <person name="Chaouch M."/>
            <person name="Kassouri N."/>
            <person name="Jabbour R."/>
            <person name="Grid D."/>
            <person name="Megarbane A."/>
            <person name="Haase G."/>
            <person name="Levy N."/>
        </authorList>
    </citation>
    <scope>INVOLVEMENT IN CMT4H</scope>
    <scope>VARIANTS CMT4H ARG-298 AND THR-298</scope>
    <scope>TISSUE SPECIFICITY</scope>
    <scope>ALTERNATIVE SPLICING</scope>
</reference>
<reference key="6">
    <citation type="journal article" date="2007" name="Am. J. Hum. Genet.">
        <title>Peripheral nerve demyelination caused by a mutant Rho GTPase guanine nucleotide exchange factor, frabin/FGD4.</title>
        <authorList>
            <person name="Stendel C."/>
            <person name="Roos A."/>
            <person name="Deconinck T."/>
            <person name="Pereira J."/>
            <person name="Castagner F."/>
            <person name="Niemann A."/>
            <person name="Kirschner J."/>
            <person name="Korinthenberg R."/>
            <person name="Ketelsen U.-P."/>
            <person name="Battaloglu E."/>
            <person name="Parman Y."/>
            <person name="Nicholson G."/>
            <person name="Ouvrier R."/>
            <person name="Seeger J."/>
            <person name="De Jonghe P."/>
            <person name="Weis J."/>
            <person name="Kruettgen A."/>
            <person name="Rudnik-Schoeneborn S."/>
            <person name="Bergmann C."/>
            <person name="Suter U."/>
            <person name="Zerres K."/>
            <person name="Timmerman V."/>
            <person name="Relvas J.B."/>
            <person name="Senderek J."/>
        </authorList>
    </citation>
    <scope>INVOLVEMENT IN CMT4H</scope>
    <scope>VARIANT CMT4H ARG-298</scope>
</reference>
<reference key="7">
    <citation type="journal article" date="2014" name="J. Proteomics">
        <title>An enzyme assisted RP-RPLC approach for in-depth analysis of human liver phosphoproteome.</title>
        <authorList>
            <person name="Bian Y."/>
            <person name="Song C."/>
            <person name="Cheng K."/>
            <person name="Dong M."/>
            <person name="Wang F."/>
            <person name="Huang J."/>
            <person name="Sun D."/>
            <person name="Wang L."/>
            <person name="Ye M."/>
            <person name="Zou H."/>
        </authorList>
    </citation>
    <scope>PHOSPHORYLATION [LARGE SCALE ANALYSIS] AT SER-702</scope>
    <scope>IDENTIFICATION BY MASS SPECTROMETRY [LARGE SCALE ANALYSIS]</scope>
    <source>
        <tissue>Liver</tissue>
    </source>
</reference>
<accession>Q96M96</accession>
<accession>Q6ULS2</accession>
<accession>Q8TCP6</accession>
<comment type="function">
    <text evidence="1 7">Activates CDC42, a member of the Ras-like family of Rho- and Rac proteins, by exchanging bound GDP for free GTP. Plays a role in regulating the actin cytoskeleton and cell shape. Activates MAPK8 (By similarity).</text>
</comment>
<comment type="subunit">
    <text evidence="1">Homooligomer.</text>
</comment>
<comment type="subcellular location">
    <subcellularLocation>
        <location evidence="1">Cytoplasm</location>
        <location evidence="1">Cytoskeleton</location>
    </subcellularLocation>
    <subcellularLocation>
        <location evidence="1">Cell projection</location>
        <location evidence="1">Filopodium</location>
    </subcellularLocation>
    <text evidence="1">Concentrated in filopodia and poorly detected at lamellipodia. Binds along the sides of actin fibers (By similarity).</text>
</comment>
<comment type="alternative products">
    <event type="alternative splicing"/>
    <isoform>
        <id>Q96M96-1</id>
        <name>1</name>
        <sequence type="displayed"/>
    </isoform>
    <isoform>
        <id>Q96M96-2</id>
        <name>2</name>
        <sequence type="described" ref="VSP_013078 VSP_013082"/>
    </isoform>
    <isoform>
        <id>Q96M96-3</id>
        <name>3</name>
        <sequence type="described" ref="VSP_013079 VSP_013080 VSP_013081"/>
    </isoform>
    <text>Additional isoforms seem to exist.</text>
</comment>
<comment type="tissue specificity">
    <text evidence="8">Expressed in different tissues, including brain, cerebellum, peripheral nerve, skeletal muscle, heart, uterus, placenta and testis.</text>
</comment>
<comment type="domain">
    <text evidence="1">The part of the protein spanning the actin filament-binding domain together with the DH domain and the first PH domain is necessary and sufficient for microspike formation. Activation of MAPK8 requires the presence of all domains with the exception of the actin filament-binding domain (By similarity).</text>
</comment>
<comment type="disease" evidence="8 9">
    <disease id="DI-00290">
        <name>Charcot-Marie-Tooth disease, demyelinating, type 4H</name>
        <acronym>CMT4H</acronym>
        <description>A recessive demyelinating form of Charcot-Marie-Tooth disease, a disorder of the peripheral nervous system, characterized by progressive weakness and atrophy, initially of the peroneal muscles and later of the distal muscles of the arms. Charcot-Marie-Tooth disease is classified in two main groups on the basis of electrophysiologic properties and histopathology: primary peripheral demyelinating neuropathies (designated CMT1 when they are dominantly inherited) and primary peripheral axonal neuropathies (CMT2). Demyelinating neuropathies are characterized by severely reduced nerve conduction velocities (less than 38 m/sec), segmental demyelination and remyelination with onion bulb formations on nerve biopsy, slowly progressive distal muscle atrophy and weakness, absent deep tendon reflexes, and hollow feet. By convention autosomal recessive forms of demyelinating Charcot-Marie-Tooth disease are designated CMT4.</description>
        <dbReference type="MIM" id="609311"/>
    </disease>
    <text>The disease is caused by variants affecting the gene represented in this entry.</text>
</comment>
<dbReference type="EMBL" id="AY367054">
    <property type="protein sequence ID" value="AAQ72372.1"/>
    <property type="molecule type" value="mRNA"/>
</dbReference>
<dbReference type="EMBL" id="AK057294">
    <property type="protein sequence ID" value="BAB71413.1"/>
    <property type="molecule type" value="mRNA"/>
</dbReference>
<dbReference type="EMBL" id="AL713762">
    <property type="protein sequence ID" value="CAD28532.1"/>
    <property type="molecule type" value="mRNA"/>
</dbReference>
<dbReference type="CCDS" id="CCDS8727.1">
    <molecule id="Q96M96-1"/>
</dbReference>
<dbReference type="RefSeq" id="NP_001291409.1">
    <property type="nucleotide sequence ID" value="NM_001304480.1"/>
</dbReference>
<dbReference type="RefSeq" id="NP_001317302.1">
    <property type="nucleotide sequence ID" value="NM_001330373.1"/>
</dbReference>
<dbReference type="RefSeq" id="NP_001317303.1">
    <property type="nucleotide sequence ID" value="NM_001330374.1"/>
</dbReference>
<dbReference type="RefSeq" id="NP_001372047.1">
    <molecule id="Q96M96-1"/>
    <property type="nucleotide sequence ID" value="NM_001385118.1"/>
</dbReference>
<dbReference type="RefSeq" id="NP_640334.2">
    <molecule id="Q96M96-1"/>
    <property type="nucleotide sequence ID" value="NM_139241.3"/>
</dbReference>
<dbReference type="RefSeq" id="XP_011518857.1">
    <property type="nucleotide sequence ID" value="XM_011520555.1"/>
</dbReference>
<dbReference type="RefSeq" id="XP_011518858.1">
    <property type="nucleotide sequence ID" value="XM_011520556.1"/>
</dbReference>
<dbReference type="RefSeq" id="XP_047284249.1">
    <molecule id="Q96M96-1"/>
    <property type="nucleotide sequence ID" value="XM_047428293.1"/>
</dbReference>
<dbReference type="RefSeq" id="XP_054227064.1">
    <molecule id="Q96M96-1"/>
    <property type="nucleotide sequence ID" value="XM_054371089.1"/>
</dbReference>
<dbReference type="SMR" id="Q96M96"/>
<dbReference type="BioGRID" id="125734">
    <property type="interactions" value="22"/>
</dbReference>
<dbReference type="FunCoup" id="Q96M96">
    <property type="interactions" value="1004"/>
</dbReference>
<dbReference type="IntAct" id="Q96M96">
    <property type="interactions" value="6"/>
</dbReference>
<dbReference type="STRING" id="9606.ENSP00000433666"/>
<dbReference type="iPTMnet" id="Q96M96"/>
<dbReference type="PhosphoSitePlus" id="Q96M96"/>
<dbReference type="BioMuta" id="FGD4"/>
<dbReference type="DMDM" id="116241363"/>
<dbReference type="jPOST" id="Q96M96"/>
<dbReference type="MassIVE" id="Q96M96"/>
<dbReference type="PaxDb" id="9606-ENSP00000394487"/>
<dbReference type="PeptideAtlas" id="Q96M96"/>
<dbReference type="ProteomicsDB" id="77320">
    <molecule id="Q96M96-1"/>
</dbReference>
<dbReference type="ProteomicsDB" id="77321">
    <molecule id="Q96M96-2"/>
</dbReference>
<dbReference type="ProteomicsDB" id="77322">
    <molecule id="Q96M96-3"/>
</dbReference>
<dbReference type="Pumba" id="Q96M96"/>
<dbReference type="Antibodypedia" id="48934">
    <property type="antibodies" value="99 antibodies from 20 providers"/>
</dbReference>
<dbReference type="DNASU" id="121512"/>
<dbReference type="Ensembl" id="ENST00000427716.7">
    <molecule id="Q96M96-1"/>
    <property type="protein sequence ID" value="ENSP00000394487.2"/>
    <property type="gene ID" value="ENSG00000139132.16"/>
</dbReference>
<dbReference type="Ensembl" id="ENST00000525053.6">
    <molecule id="Q96M96-1"/>
    <property type="protein sequence ID" value="ENSP00000433666.2"/>
    <property type="gene ID" value="ENSG00000139132.16"/>
</dbReference>
<dbReference type="Ensembl" id="ENST00000583694.2">
    <molecule id="Q96M96-1"/>
    <property type="protein sequence ID" value="ENSP00000462623.2"/>
    <property type="gene ID" value="ENSG00000139132.16"/>
</dbReference>
<dbReference type="GeneID" id="121512"/>
<dbReference type="KEGG" id="hsa:121512"/>
<dbReference type="UCSC" id="uc001rkz.5">
    <molecule id="Q96M96-1"/>
    <property type="organism name" value="human"/>
</dbReference>
<dbReference type="AGR" id="HGNC:19125"/>
<dbReference type="CTD" id="121512"/>
<dbReference type="DisGeNET" id="121512"/>
<dbReference type="GeneCards" id="FGD4"/>
<dbReference type="HGNC" id="HGNC:19125">
    <property type="gene designation" value="FGD4"/>
</dbReference>
<dbReference type="HPA" id="ENSG00000139132">
    <property type="expression patterns" value="Low tissue specificity"/>
</dbReference>
<dbReference type="MalaCards" id="FGD4"/>
<dbReference type="MIM" id="609311">
    <property type="type" value="phenotype"/>
</dbReference>
<dbReference type="MIM" id="611104">
    <property type="type" value="gene"/>
</dbReference>
<dbReference type="neXtProt" id="NX_Q96M96"/>
<dbReference type="OpenTargets" id="ENSG00000139132"/>
<dbReference type="Orphanet" id="99954">
    <property type="disease" value="Charcot-Marie-Tooth disease type 4H"/>
</dbReference>
<dbReference type="PharmGKB" id="PA134907925"/>
<dbReference type="VEuPathDB" id="HostDB:ENSG00000139132"/>
<dbReference type="eggNOG" id="KOG4424">
    <property type="taxonomic scope" value="Eukaryota"/>
</dbReference>
<dbReference type="GeneTree" id="ENSGT00940000155765"/>
<dbReference type="InParanoid" id="Q96M96"/>
<dbReference type="OMA" id="AHPMFPP"/>
<dbReference type="OrthoDB" id="660555at2759"/>
<dbReference type="PAN-GO" id="Q96M96">
    <property type="GO annotations" value="3 GO annotations based on evolutionary models"/>
</dbReference>
<dbReference type="PhylomeDB" id="Q96M96"/>
<dbReference type="TreeFam" id="TF316247"/>
<dbReference type="PathwayCommons" id="Q96M96"/>
<dbReference type="Reactome" id="R-HSA-193648">
    <property type="pathway name" value="NRAGE signals death through JNK"/>
</dbReference>
<dbReference type="Reactome" id="R-HSA-416482">
    <property type="pathway name" value="G alpha (12/13) signalling events"/>
</dbReference>
<dbReference type="Reactome" id="R-HSA-9013148">
    <property type="pathway name" value="CDC42 GTPase cycle"/>
</dbReference>
<dbReference type="SignaLink" id="Q96M96"/>
<dbReference type="SIGNOR" id="Q96M96"/>
<dbReference type="BioGRID-ORCS" id="121512">
    <property type="hits" value="6 hits in 1139 CRISPR screens"/>
</dbReference>
<dbReference type="ChiTaRS" id="FGD4">
    <property type="organism name" value="human"/>
</dbReference>
<dbReference type="GeneWiki" id="FGD4"/>
<dbReference type="GenomeRNAi" id="121512"/>
<dbReference type="Pharos" id="Q96M96">
    <property type="development level" value="Tbio"/>
</dbReference>
<dbReference type="PRO" id="PR:Q96M96"/>
<dbReference type="Proteomes" id="UP000005640">
    <property type="component" value="Chromosome 12"/>
</dbReference>
<dbReference type="RNAct" id="Q96M96">
    <property type="molecule type" value="protein"/>
</dbReference>
<dbReference type="Bgee" id="ENSG00000139132">
    <property type="expression patterns" value="Expressed in jejunal mucosa and 190 other cell types or tissues"/>
</dbReference>
<dbReference type="ExpressionAtlas" id="Q96M96">
    <property type="expression patterns" value="baseline and differential"/>
</dbReference>
<dbReference type="GO" id="GO:0005737">
    <property type="term" value="C:cytoplasm"/>
    <property type="evidence" value="ECO:0000250"/>
    <property type="project" value="UniProtKB"/>
</dbReference>
<dbReference type="GO" id="GO:0005856">
    <property type="term" value="C:cytoskeleton"/>
    <property type="evidence" value="ECO:0007669"/>
    <property type="project" value="UniProtKB-SubCell"/>
</dbReference>
<dbReference type="GO" id="GO:0005829">
    <property type="term" value="C:cytosol"/>
    <property type="evidence" value="ECO:0000304"/>
    <property type="project" value="Reactome"/>
</dbReference>
<dbReference type="GO" id="GO:0030175">
    <property type="term" value="C:filopodium"/>
    <property type="evidence" value="ECO:0007669"/>
    <property type="project" value="UniProtKB-SubCell"/>
</dbReference>
<dbReference type="GO" id="GO:0005794">
    <property type="term" value="C:Golgi apparatus"/>
    <property type="evidence" value="ECO:0000250"/>
    <property type="project" value="UniProtKB"/>
</dbReference>
<dbReference type="GO" id="GO:0030027">
    <property type="term" value="C:lamellipodium"/>
    <property type="evidence" value="ECO:0000250"/>
    <property type="project" value="UniProtKB"/>
</dbReference>
<dbReference type="GO" id="GO:0001726">
    <property type="term" value="C:ruffle"/>
    <property type="evidence" value="ECO:0000250"/>
    <property type="project" value="UniProtKB"/>
</dbReference>
<dbReference type="GO" id="GO:0003779">
    <property type="term" value="F:actin binding"/>
    <property type="evidence" value="ECO:0007669"/>
    <property type="project" value="UniProtKB-KW"/>
</dbReference>
<dbReference type="GO" id="GO:0005085">
    <property type="term" value="F:guanyl-nucleotide exchange factor activity"/>
    <property type="evidence" value="ECO:0000250"/>
    <property type="project" value="UniProtKB"/>
</dbReference>
<dbReference type="GO" id="GO:0031267">
    <property type="term" value="F:small GTPase binding"/>
    <property type="evidence" value="ECO:0000250"/>
    <property type="project" value="UniProtKB"/>
</dbReference>
<dbReference type="GO" id="GO:0008270">
    <property type="term" value="F:zinc ion binding"/>
    <property type="evidence" value="ECO:0007669"/>
    <property type="project" value="UniProtKB-KW"/>
</dbReference>
<dbReference type="GO" id="GO:0030036">
    <property type="term" value="P:actin cytoskeleton organization"/>
    <property type="evidence" value="ECO:0000250"/>
    <property type="project" value="UniProtKB"/>
</dbReference>
<dbReference type="GO" id="GO:0007010">
    <property type="term" value="P:cytoskeleton organization"/>
    <property type="evidence" value="ECO:0000250"/>
    <property type="project" value="UniProtKB"/>
</dbReference>
<dbReference type="GO" id="GO:0046847">
    <property type="term" value="P:filopodium assembly"/>
    <property type="evidence" value="ECO:0000250"/>
    <property type="project" value="UniProtKB"/>
</dbReference>
<dbReference type="GO" id="GO:0008360">
    <property type="term" value="P:regulation of cell shape"/>
    <property type="evidence" value="ECO:0000250"/>
    <property type="project" value="UniProtKB"/>
</dbReference>
<dbReference type="GO" id="GO:0043087">
    <property type="term" value="P:regulation of GTPase activity"/>
    <property type="evidence" value="ECO:0000250"/>
    <property type="project" value="UniProtKB"/>
</dbReference>
<dbReference type="GO" id="GO:0051056">
    <property type="term" value="P:regulation of small GTPase mediated signal transduction"/>
    <property type="evidence" value="ECO:0000304"/>
    <property type="project" value="Reactome"/>
</dbReference>
<dbReference type="CDD" id="cd15741">
    <property type="entry name" value="FYVE_FGD1_2_4"/>
    <property type="match status" value="1"/>
</dbReference>
<dbReference type="CDD" id="cd15791">
    <property type="entry name" value="PH1_FDG4"/>
    <property type="match status" value="1"/>
</dbReference>
<dbReference type="CDD" id="cd13236">
    <property type="entry name" value="PH2_FGD1-4"/>
    <property type="match status" value="1"/>
</dbReference>
<dbReference type="CDD" id="cd00160">
    <property type="entry name" value="RhoGEF"/>
    <property type="match status" value="1"/>
</dbReference>
<dbReference type="FunFam" id="3.30.40.10:FF:000061">
    <property type="entry name" value="FYVE, RhoGEF and PH domain containing 1"/>
    <property type="match status" value="1"/>
</dbReference>
<dbReference type="FunFam" id="1.20.900.10:FF:000013">
    <property type="entry name" value="FYVE, RhoGEF and PH domain-containing protein 4"/>
    <property type="match status" value="1"/>
</dbReference>
<dbReference type="FunFam" id="2.30.29.30:FF:000102">
    <property type="entry name" value="FYVE, RhoGEF and PH domain-containing protein 4"/>
    <property type="match status" value="1"/>
</dbReference>
<dbReference type="FunFam" id="2.30.29.30:FF:000113">
    <property type="entry name" value="FYVE, RhoGEF and PH domain-containing protein 4"/>
    <property type="match status" value="1"/>
</dbReference>
<dbReference type="Gene3D" id="1.20.900.10">
    <property type="entry name" value="Dbl homology (DH) domain"/>
    <property type="match status" value="1"/>
</dbReference>
<dbReference type="Gene3D" id="2.30.29.30">
    <property type="entry name" value="Pleckstrin-homology domain (PH domain)/Phosphotyrosine-binding domain (PTB)"/>
    <property type="match status" value="2"/>
</dbReference>
<dbReference type="Gene3D" id="3.30.40.10">
    <property type="entry name" value="Zinc/RING finger domain, C3HC4 (zinc finger)"/>
    <property type="match status" value="1"/>
</dbReference>
<dbReference type="InterPro" id="IPR035899">
    <property type="entry name" value="DBL_dom_sf"/>
</dbReference>
<dbReference type="InterPro" id="IPR000219">
    <property type="entry name" value="DH_dom"/>
</dbReference>
<dbReference type="InterPro" id="IPR037742">
    <property type="entry name" value="FDG4_N_PH"/>
</dbReference>
<dbReference type="InterPro" id="IPR035941">
    <property type="entry name" value="FGD1-4_PH2"/>
</dbReference>
<dbReference type="InterPro" id="IPR051092">
    <property type="entry name" value="FYVE_RhoGEF_PH"/>
</dbReference>
<dbReference type="InterPro" id="IPR011993">
    <property type="entry name" value="PH-like_dom_sf"/>
</dbReference>
<dbReference type="InterPro" id="IPR001849">
    <property type="entry name" value="PH_domain"/>
</dbReference>
<dbReference type="InterPro" id="IPR000306">
    <property type="entry name" value="Znf_FYVE"/>
</dbReference>
<dbReference type="InterPro" id="IPR017455">
    <property type="entry name" value="Znf_FYVE-rel"/>
</dbReference>
<dbReference type="InterPro" id="IPR013083">
    <property type="entry name" value="Znf_RING/FYVE/PHD"/>
</dbReference>
<dbReference type="PANTHER" id="PTHR12673">
    <property type="entry name" value="FACIOGENITAL DYSPLASIA PROTEIN"/>
    <property type="match status" value="1"/>
</dbReference>
<dbReference type="PANTHER" id="PTHR12673:SF98">
    <property type="entry name" value="FYVE, RHOGEF AND PH DOMAIN-CONTAINING PROTEIN 4"/>
    <property type="match status" value="1"/>
</dbReference>
<dbReference type="Pfam" id="PF01363">
    <property type="entry name" value="FYVE"/>
    <property type="match status" value="1"/>
</dbReference>
<dbReference type="Pfam" id="PF00169">
    <property type="entry name" value="PH"/>
    <property type="match status" value="2"/>
</dbReference>
<dbReference type="Pfam" id="PF00621">
    <property type="entry name" value="RhoGEF"/>
    <property type="match status" value="1"/>
</dbReference>
<dbReference type="SMART" id="SM00064">
    <property type="entry name" value="FYVE"/>
    <property type="match status" value="1"/>
</dbReference>
<dbReference type="SMART" id="SM00233">
    <property type="entry name" value="PH"/>
    <property type="match status" value="2"/>
</dbReference>
<dbReference type="SMART" id="SM00325">
    <property type="entry name" value="RhoGEF"/>
    <property type="match status" value="1"/>
</dbReference>
<dbReference type="SUPFAM" id="SSF48065">
    <property type="entry name" value="DBL homology domain (DH-domain)"/>
    <property type="match status" value="1"/>
</dbReference>
<dbReference type="SUPFAM" id="SSF50729">
    <property type="entry name" value="PH domain-like"/>
    <property type="match status" value="2"/>
</dbReference>
<dbReference type="PROSITE" id="PS50010">
    <property type="entry name" value="DH_2"/>
    <property type="match status" value="1"/>
</dbReference>
<dbReference type="PROSITE" id="PS50003">
    <property type="entry name" value="PH_DOMAIN"/>
    <property type="match status" value="2"/>
</dbReference>
<dbReference type="PROSITE" id="PS50178">
    <property type="entry name" value="ZF_FYVE"/>
    <property type="match status" value="1"/>
</dbReference>
<evidence type="ECO:0000250" key="1"/>
<evidence type="ECO:0000250" key="2">
    <source>
        <dbReference type="UniProtKB" id="Q91ZT5"/>
    </source>
</evidence>
<evidence type="ECO:0000255" key="3">
    <source>
        <dbReference type="PROSITE-ProRule" id="PRU00062"/>
    </source>
</evidence>
<evidence type="ECO:0000255" key="4">
    <source>
        <dbReference type="PROSITE-ProRule" id="PRU00091"/>
    </source>
</evidence>
<evidence type="ECO:0000255" key="5">
    <source>
        <dbReference type="PROSITE-ProRule" id="PRU00145"/>
    </source>
</evidence>
<evidence type="ECO:0000256" key="6">
    <source>
        <dbReference type="SAM" id="MobiDB-lite"/>
    </source>
</evidence>
<evidence type="ECO:0000269" key="7">
    <source>
    </source>
</evidence>
<evidence type="ECO:0000269" key="8">
    <source>
    </source>
</evidence>
<evidence type="ECO:0000269" key="9">
    <source>
    </source>
</evidence>
<evidence type="ECO:0000303" key="10">
    <source>
    </source>
</evidence>
<evidence type="ECO:0000303" key="11">
    <source ref="1"/>
</evidence>
<evidence type="ECO:0000305" key="12"/>
<evidence type="ECO:0007744" key="13">
    <source>
    </source>
</evidence>
<keyword id="KW-0009">Actin-binding</keyword>
<keyword id="KW-0025">Alternative splicing</keyword>
<keyword id="KW-0966">Cell projection</keyword>
<keyword id="KW-0144">Charcot-Marie-Tooth disease</keyword>
<keyword id="KW-0963">Cytoplasm</keyword>
<keyword id="KW-0206">Cytoskeleton</keyword>
<keyword id="KW-0225">Disease variant</keyword>
<keyword id="KW-0344">Guanine-nucleotide releasing factor</keyword>
<keyword id="KW-0479">Metal-binding</keyword>
<keyword id="KW-0523">Neurodegeneration</keyword>
<keyword id="KW-0622">Neuropathy</keyword>
<keyword id="KW-0597">Phosphoprotein</keyword>
<keyword id="KW-1267">Proteomics identification</keyword>
<keyword id="KW-1185">Reference proteome</keyword>
<keyword id="KW-0677">Repeat</keyword>
<keyword id="KW-0862">Zinc</keyword>
<keyword id="KW-0863">Zinc-finger</keyword>
<proteinExistence type="evidence at protein level"/>
<organism>
    <name type="scientific">Homo sapiens</name>
    <name type="common">Human</name>
    <dbReference type="NCBI Taxonomy" id="9606"/>
    <lineage>
        <taxon>Eukaryota</taxon>
        <taxon>Metazoa</taxon>
        <taxon>Chordata</taxon>
        <taxon>Craniata</taxon>
        <taxon>Vertebrata</taxon>
        <taxon>Euteleostomi</taxon>
        <taxon>Mammalia</taxon>
        <taxon>Eutheria</taxon>
        <taxon>Euarchontoglires</taxon>
        <taxon>Primates</taxon>
        <taxon>Haplorrhini</taxon>
        <taxon>Catarrhini</taxon>
        <taxon>Hominidae</taxon>
        <taxon>Homo</taxon>
    </lineage>
</organism>